<protein>
    <recommendedName>
        <fullName evidence="1">Ribosomal protein uS12 methylthiotransferase RimO</fullName>
        <shortName evidence="1">uS12 MTTase</shortName>
        <shortName evidence="1">uS12 methylthiotransferase</shortName>
        <ecNumber evidence="1">2.8.4.4</ecNumber>
    </recommendedName>
    <alternativeName>
        <fullName evidence="1">Ribosomal protein uS12 (aspartate-C(3))-methylthiotransferase</fullName>
    </alternativeName>
    <alternativeName>
        <fullName evidence="1">Ribosome maturation factor RimO</fullName>
    </alternativeName>
</protein>
<keyword id="KW-0004">4Fe-4S</keyword>
<keyword id="KW-0963">Cytoplasm</keyword>
<keyword id="KW-0408">Iron</keyword>
<keyword id="KW-0411">Iron-sulfur</keyword>
<keyword id="KW-0479">Metal-binding</keyword>
<keyword id="KW-1185">Reference proteome</keyword>
<keyword id="KW-0949">S-adenosyl-L-methionine</keyword>
<keyword id="KW-0808">Transferase</keyword>
<evidence type="ECO:0000255" key="1">
    <source>
        <dbReference type="HAMAP-Rule" id="MF_01865"/>
    </source>
</evidence>
<evidence type="ECO:0000255" key="2">
    <source>
        <dbReference type="PROSITE-ProRule" id="PRU01266"/>
    </source>
</evidence>
<feature type="chain" id="PRO_0000374965" description="Ribosomal protein uS12 methylthiotransferase RimO">
    <location>
        <begin position="1"/>
        <end position="455"/>
    </location>
</feature>
<feature type="domain" description="MTTase N-terminal" evidence="1">
    <location>
        <begin position="30"/>
        <end position="140"/>
    </location>
</feature>
<feature type="domain" description="Radical SAM core" evidence="2">
    <location>
        <begin position="157"/>
        <end position="386"/>
    </location>
</feature>
<feature type="domain" description="TRAM" evidence="1">
    <location>
        <begin position="389"/>
        <end position="455"/>
    </location>
</feature>
<feature type="binding site" evidence="1">
    <location>
        <position position="39"/>
    </location>
    <ligand>
        <name>[4Fe-4S] cluster</name>
        <dbReference type="ChEBI" id="CHEBI:49883"/>
        <label>1</label>
    </ligand>
</feature>
<feature type="binding site" evidence="1">
    <location>
        <position position="75"/>
    </location>
    <ligand>
        <name>[4Fe-4S] cluster</name>
        <dbReference type="ChEBI" id="CHEBI:49883"/>
        <label>1</label>
    </ligand>
</feature>
<feature type="binding site" evidence="1">
    <location>
        <position position="104"/>
    </location>
    <ligand>
        <name>[4Fe-4S] cluster</name>
        <dbReference type="ChEBI" id="CHEBI:49883"/>
        <label>1</label>
    </ligand>
</feature>
<feature type="binding site" evidence="1">
    <location>
        <position position="171"/>
    </location>
    <ligand>
        <name>[4Fe-4S] cluster</name>
        <dbReference type="ChEBI" id="CHEBI:49883"/>
        <label>2</label>
        <note>4Fe-4S-S-AdoMet</note>
    </ligand>
</feature>
<feature type="binding site" evidence="1">
    <location>
        <position position="175"/>
    </location>
    <ligand>
        <name>[4Fe-4S] cluster</name>
        <dbReference type="ChEBI" id="CHEBI:49883"/>
        <label>2</label>
        <note>4Fe-4S-S-AdoMet</note>
    </ligand>
</feature>
<feature type="binding site" evidence="1">
    <location>
        <position position="178"/>
    </location>
    <ligand>
        <name>[4Fe-4S] cluster</name>
        <dbReference type="ChEBI" id="CHEBI:49883"/>
        <label>2</label>
        <note>4Fe-4S-S-AdoMet</note>
    </ligand>
</feature>
<organism>
    <name type="scientific">Cereibacter sphaeroides (strain ATCC 17023 / DSM 158 / JCM 6121 / CCUG 31486 / LMG 2827 / NBRC 12203 / NCIMB 8253 / ATH 2.4.1.)</name>
    <name type="common">Rhodobacter sphaeroides</name>
    <dbReference type="NCBI Taxonomy" id="272943"/>
    <lineage>
        <taxon>Bacteria</taxon>
        <taxon>Pseudomonadati</taxon>
        <taxon>Pseudomonadota</taxon>
        <taxon>Alphaproteobacteria</taxon>
        <taxon>Rhodobacterales</taxon>
        <taxon>Paracoccaceae</taxon>
        <taxon>Cereibacter</taxon>
    </lineage>
</organism>
<comment type="function">
    <text evidence="1">Catalyzes the methylthiolation of an aspartic acid residue of ribosomal protein uS12.</text>
</comment>
<comment type="catalytic activity">
    <reaction evidence="1">
        <text>L-aspartate(89)-[ribosomal protein uS12]-hydrogen + (sulfur carrier)-SH + AH2 + 2 S-adenosyl-L-methionine = 3-methylsulfanyl-L-aspartate(89)-[ribosomal protein uS12]-hydrogen + (sulfur carrier)-H + 5'-deoxyadenosine + L-methionine + A + S-adenosyl-L-homocysteine + 2 H(+)</text>
        <dbReference type="Rhea" id="RHEA:37087"/>
        <dbReference type="Rhea" id="RHEA-COMP:10460"/>
        <dbReference type="Rhea" id="RHEA-COMP:10461"/>
        <dbReference type="Rhea" id="RHEA-COMP:14737"/>
        <dbReference type="Rhea" id="RHEA-COMP:14739"/>
        <dbReference type="ChEBI" id="CHEBI:13193"/>
        <dbReference type="ChEBI" id="CHEBI:15378"/>
        <dbReference type="ChEBI" id="CHEBI:17319"/>
        <dbReference type="ChEBI" id="CHEBI:17499"/>
        <dbReference type="ChEBI" id="CHEBI:29917"/>
        <dbReference type="ChEBI" id="CHEBI:29961"/>
        <dbReference type="ChEBI" id="CHEBI:57844"/>
        <dbReference type="ChEBI" id="CHEBI:57856"/>
        <dbReference type="ChEBI" id="CHEBI:59789"/>
        <dbReference type="ChEBI" id="CHEBI:64428"/>
        <dbReference type="ChEBI" id="CHEBI:73599"/>
        <dbReference type="EC" id="2.8.4.4"/>
    </reaction>
</comment>
<comment type="cofactor">
    <cofactor evidence="1">
        <name>[4Fe-4S] cluster</name>
        <dbReference type="ChEBI" id="CHEBI:49883"/>
    </cofactor>
    <text evidence="1">Binds 2 [4Fe-4S] clusters. One cluster is coordinated with 3 cysteines and an exchangeable S-adenosyl-L-methionine.</text>
</comment>
<comment type="subcellular location">
    <subcellularLocation>
        <location evidence="1">Cytoplasm</location>
    </subcellularLocation>
</comment>
<comment type="similarity">
    <text evidence="1">Belongs to the methylthiotransferase family. RimO subfamily.</text>
</comment>
<name>RIMO_CERS4</name>
<accession>Q3J3Y8</accession>
<reference key="1">
    <citation type="submission" date="2005-09" db="EMBL/GenBank/DDBJ databases">
        <title>Complete sequence of chromosome 1 of Rhodobacter sphaeroides 2.4.1.</title>
        <authorList>
            <person name="Copeland A."/>
            <person name="Lucas S."/>
            <person name="Lapidus A."/>
            <person name="Barry K."/>
            <person name="Detter J.C."/>
            <person name="Glavina T."/>
            <person name="Hammon N."/>
            <person name="Israni S."/>
            <person name="Pitluck S."/>
            <person name="Richardson P."/>
            <person name="Mackenzie C."/>
            <person name="Choudhary M."/>
            <person name="Larimer F."/>
            <person name="Hauser L.J."/>
            <person name="Land M."/>
            <person name="Donohue T.J."/>
            <person name="Kaplan S."/>
        </authorList>
    </citation>
    <scope>NUCLEOTIDE SEQUENCE [LARGE SCALE GENOMIC DNA]</scope>
    <source>
        <strain>ATCC 17023 / DSM 158 / JCM 6121 / CCUG 31486 / LMG 2827 / NBRC 12203 / NCIMB 8253 / ATH 2.4.1.</strain>
    </source>
</reference>
<dbReference type="EC" id="2.8.4.4" evidence="1"/>
<dbReference type="EMBL" id="CP000143">
    <property type="protein sequence ID" value="ABA78496.2"/>
    <property type="molecule type" value="Genomic_DNA"/>
</dbReference>
<dbReference type="RefSeq" id="WP_017140143.1">
    <property type="nucleotide sequence ID" value="NC_007493.2"/>
</dbReference>
<dbReference type="RefSeq" id="YP_352397.2">
    <property type="nucleotide sequence ID" value="NC_007493.2"/>
</dbReference>
<dbReference type="SMR" id="Q3J3Y8"/>
<dbReference type="STRING" id="272943.RSP_2340"/>
<dbReference type="EnsemblBacteria" id="ABA78496">
    <property type="protein sequence ID" value="ABA78496"/>
    <property type="gene ID" value="RSP_2340"/>
</dbReference>
<dbReference type="GeneID" id="3719873"/>
<dbReference type="KEGG" id="rsp:RSP_2340"/>
<dbReference type="PATRIC" id="fig|272943.9.peg.1254"/>
<dbReference type="eggNOG" id="COG0621">
    <property type="taxonomic scope" value="Bacteria"/>
</dbReference>
<dbReference type="OrthoDB" id="9805215at2"/>
<dbReference type="Proteomes" id="UP000002703">
    <property type="component" value="Chromosome 1"/>
</dbReference>
<dbReference type="GO" id="GO:0005829">
    <property type="term" value="C:cytosol"/>
    <property type="evidence" value="ECO:0007669"/>
    <property type="project" value="TreeGrafter"/>
</dbReference>
<dbReference type="GO" id="GO:0051539">
    <property type="term" value="F:4 iron, 4 sulfur cluster binding"/>
    <property type="evidence" value="ECO:0007669"/>
    <property type="project" value="UniProtKB-UniRule"/>
</dbReference>
<dbReference type="GO" id="GO:0035599">
    <property type="term" value="F:aspartic acid methylthiotransferase activity"/>
    <property type="evidence" value="ECO:0007669"/>
    <property type="project" value="TreeGrafter"/>
</dbReference>
<dbReference type="GO" id="GO:0046872">
    <property type="term" value="F:metal ion binding"/>
    <property type="evidence" value="ECO:0007669"/>
    <property type="project" value="UniProtKB-KW"/>
</dbReference>
<dbReference type="GO" id="GO:0103039">
    <property type="term" value="F:protein methylthiotransferase activity"/>
    <property type="evidence" value="ECO:0007669"/>
    <property type="project" value="UniProtKB-EC"/>
</dbReference>
<dbReference type="GO" id="GO:0006400">
    <property type="term" value="P:tRNA modification"/>
    <property type="evidence" value="ECO:0007669"/>
    <property type="project" value="InterPro"/>
</dbReference>
<dbReference type="CDD" id="cd01335">
    <property type="entry name" value="Radical_SAM"/>
    <property type="match status" value="1"/>
</dbReference>
<dbReference type="FunFam" id="3.40.50.12160:FF:000002">
    <property type="entry name" value="Ribosomal protein S12 methylthiotransferase RimO"/>
    <property type="match status" value="1"/>
</dbReference>
<dbReference type="FunFam" id="3.80.30.20:FF:000001">
    <property type="entry name" value="tRNA-2-methylthio-N(6)-dimethylallyladenosine synthase 2"/>
    <property type="match status" value="1"/>
</dbReference>
<dbReference type="Gene3D" id="3.40.50.12160">
    <property type="entry name" value="Methylthiotransferase, N-terminal domain"/>
    <property type="match status" value="1"/>
</dbReference>
<dbReference type="Gene3D" id="2.40.50.140">
    <property type="entry name" value="Nucleic acid-binding proteins"/>
    <property type="match status" value="1"/>
</dbReference>
<dbReference type="Gene3D" id="3.80.30.20">
    <property type="entry name" value="tm_1862 like domain"/>
    <property type="match status" value="1"/>
</dbReference>
<dbReference type="HAMAP" id="MF_01865">
    <property type="entry name" value="MTTase_RimO"/>
    <property type="match status" value="1"/>
</dbReference>
<dbReference type="InterPro" id="IPR006638">
    <property type="entry name" value="Elp3/MiaA/NifB-like_rSAM"/>
</dbReference>
<dbReference type="InterPro" id="IPR005839">
    <property type="entry name" value="Methylthiotransferase"/>
</dbReference>
<dbReference type="InterPro" id="IPR013848">
    <property type="entry name" value="Methylthiotransferase_N"/>
</dbReference>
<dbReference type="InterPro" id="IPR038135">
    <property type="entry name" value="Methylthiotransferase_N_sf"/>
</dbReference>
<dbReference type="InterPro" id="IPR012340">
    <property type="entry name" value="NA-bd_OB-fold"/>
</dbReference>
<dbReference type="InterPro" id="IPR005840">
    <property type="entry name" value="Ribosomal_uS12_MeSTrfase_RimO"/>
</dbReference>
<dbReference type="InterPro" id="IPR007197">
    <property type="entry name" value="rSAM"/>
</dbReference>
<dbReference type="InterPro" id="IPR023404">
    <property type="entry name" value="rSAM_horseshoe"/>
</dbReference>
<dbReference type="InterPro" id="IPR002792">
    <property type="entry name" value="TRAM_dom"/>
</dbReference>
<dbReference type="NCBIfam" id="TIGR01125">
    <property type="entry name" value="30S ribosomal protein S12 methylthiotransferase RimO"/>
    <property type="match status" value="1"/>
</dbReference>
<dbReference type="NCBIfam" id="TIGR00089">
    <property type="entry name" value="MiaB/RimO family radical SAM methylthiotransferase"/>
    <property type="match status" value="1"/>
</dbReference>
<dbReference type="PANTHER" id="PTHR43837">
    <property type="entry name" value="RIBOSOMAL PROTEIN S12 METHYLTHIOTRANSFERASE RIMO"/>
    <property type="match status" value="1"/>
</dbReference>
<dbReference type="PANTHER" id="PTHR43837:SF1">
    <property type="entry name" value="RIBOSOMAL PROTEIN US12 METHYLTHIOTRANSFERASE RIMO"/>
    <property type="match status" value="1"/>
</dbReference>
<dbReference type="Pfam" id="PF04055">
    <property type="entry name" value="Radical_SAM"/>
    <property type="match status" value="1"/>
</dbReference>
<dbReference type="Pfam" id="PF18693">
    <property type="entry name" value="TRAM_2"/>
    <property type="match status" value="1"/>
</dbReference>
<dbReference type="Pfam" id="PF00919">
    <property type="entry name" value="UPF0004"/>
    <property type="match status" value="1"/>
</dbReference>
<dbReference type="SFLD" id="SFLDG01082">
    <property type="entry name" value="B12-binding_domain_containing"/>
    <property type="match status" value="1"/>
</dbReference>
<dbReference type="SFLD" id="SFLDS00029">
    <property type="entry name" value="Radical_SAM"/>
    <property type="match status" value="1"/>
</dbReference>
<dbReference type="SFLD" id="SFLDF00274">
    <property type="entry name" value="ribosomal_protein_S12_methylth"/>
    <property type="match status" value="1"/>
</dbReference>
<dbReference type="SMART" id="SM00729">
    <property type="entry name" value="Elp3"/>
    <property type="match status" value="1"/>
</dbReference>
<dbReference type="SUPFAM" id="SSF102114">
    <property type="entry name" value="Radical SAM enzymes"/>
    <property type="match status" value="1"/>
</dbReference>
<dbReference type="PROSITE" id="PS51449">
    <property type="entry name" value="MTTASE_N"/>
    <property type="match status" value="1"/>
</dbReference>
<dbReference type="PROSITE" id="PS51918">
    <property type="entry name" value="RADICAL_SAM"/>
    <property type="match status" value="1"/>
</dbReference>
<dbReference type="PROSITE" id="PS50926">
    <property type="entry name" value="TRAM"/>
    <property type="match status" value="1"/>
</dbReference>
<sequence length="455" mass="50143">MGAMAQNPPNLRPDLAPRLVIDSPRREGQPTIGMVSLGCPKALVDSERILTRLRAEGYAISPDYAGADAVIVNTCGFLDSAKVESLEAIGEALRENGRVIVTGCLGAEPDYITGAHPKVLAVTGPHQYEQVLDAVHGAVPPAPDPFVDLLPATGVRLTPRHFSYLKISEGCNHTCRFCIIPDMRGRLASRPERAVLREAEKLVEAGVRELLVISQDTSAYGTDWKGPEKFPILPLARELGRLGAWVRLHYVYPYPHVRELIPLMAEGLVLPYLDIPFQHAHPEVLKRMARPAAAARTLDEIAAWRRDCPEIALRSTFIVGYPGETEAEFQTLLDWLDEAQLDRVGCFQYENVAGARSNALPDHVAPEVKQERWDRFMEKAQAISEVKLAAKVGRRIEVIVDEVDEDGATCRTKADAPEIDGNLFIDEGFRGLAPGDILTVEVEEAGEYDIWGRPV</sequence>
<proteinExistence type="inferred from homology"/>
<gene>
    <name evidence="1" type="primary">rimO</name>
    <name type="ordered locus">RHOS4_09280</name>
    <name type="ORF">RSP_2340</name>
</gene>